<evidence type="ECO:0000255" key="1"/>
<evidence type="ECO:0000256" key="2">
    <source>
        <dbReference type="SAM" id="MobiDB-lite"/>
    </source>
</evidence>
<evidence type="ECO:0000305" key="3"/>
<organism>
    <name type="scientific">Mus musculus</name>
    <name type="common">Mouse</name>
    <dbReference type="NCBI Taxonomy" id="10090"/>
    <lineage>
        <taxon>Eukaryota</taxon>
        <taxon>Metazoa</taxon>
        <taxon>Chordata</taxon>
        <taxon>Craniata</taxon>
        <taxon>Vertebrata</taxon>
        <taxon>Euteleostomi</taxon>
        <taxon>Mammalia</taxon>
        <taxon>Eutheria</taxon>
        <taxon>Euarchontoglires</taxon>
        <taxon>Glires</taxon>
        <taxon>Rodentia</taxon>
        <taxon>Myomorpha</taxon>
        <taxon>Muroidea</taxon>
        <taxon>Muridae</taxon>
        <taxon>Murinae</taxon>
        <taxon>Mus</taxon>
        <taxon>Mus</taxon>
    </lineage>
</organism>
<name>TMM26_MOUSE</name>
<accession>Q3UP23</accession>
<accession>Q149T3</accession>
<accession>Q8BN94</accession>
<proteinExistence type="evidence at transcript level"/>
<keyword id="KW-0325">Glycoprotein</keyword>
<keyword id="KW-0472">Membrane</keyword>
<keyword id="KW-1185">Reference proteome</keyword>
<keyword id="KW-0812">Transmembrane</keyword>
<keyword id="KW-1133">Transmembrane helix</keyword>
<reference key="1">
    <citation type="journal article" date="2005" name="Science">
        <title>The transcriptional landscape of the mammalian genome.</title>
        <authorList>
            <person name="Carninci P."/>
            <person name="Kasukawa T."/>
            <person name="Katayama S."/>
            <person name="Gough J."/>
            <person name="Frith M.C."/>
            <person name="Maeda N."/>
            <person name="Oyama R."/>
            <person name="Ravasi T."/>
            <person name="Lenhard B."/>
            <person name="Wells C."/>
            <person name="Kodzius R."/>
            <person name="Shimokawa K."/>
            <person name="Bajic V.B."/>
            <person name="Brenner S.E."/>
            <person name="Batalov S."/>
            <person name="Forrest A.R."/>
            <person name="Zavolan M."/>
            <person name="Davis M.J."/>
            <person name="Wilming L.G."/>
            <person name="Aidinis V."/>
            <person name="Allen J.E."/>
            <person name="Ambesi-Impiombato A."/>
            <person name="Apweiler R."/>
            <person name="Aturaliya R.N."/>
            <person name="Bailey T.L."/>
            <person name="Bansal M."/>
            <person name="Baxter L."/>
            <person name="Beisel K.W."/>
            <person name="Bersano T."/>
            <person name="Bono H."/>
            <person name="Chalk A.M."/>
            <person name="Chiu K.P."/>
            <person name="Choudhary V."/>
            <person name="Christoffels A."/>
            <person name="Clutterbuck D.R."/>
            <person name="Crowe M.L."/>
            <person name="Dalla E."/>
            <person name="Dalrymple B.P."/>
            <person name="de Bono B."/>
            <person name="Della Gatta G."/>
            <person name="di Bernardo D."/>
            <person name="Down T."/>
            <person name="Engstrom P."/>
            <person name="Fagiolini M."/>
            <person name="Faulkner G."/>
            <person name="Fletcher C.F."/>
            <person name="Fukushima T."/>
            <person name="Furuno M."/>
            <person name="Futaki S."/>
            <person name="Gariboldi M."/>
            <person name="Georgii-Hemming P."/>
            <person name="Gingeras T.R."/>
            <person name="Gojobori T."/>
            <person name="Green R.E."/>
            <person name="Gustincich S."/>
            <person name="Harbers M."/>
            <person name="Hayashi Y."/>
            <person name="Hensch T.K."/>
            <person name="Hirokawa N."/>
            <person name="Hill D."/>
            <person name="Huminiecki L."/>
            <person name="Iacono M."/>
            <person name="Ikeo K."/>
            <person name="Iwama A."/>
            <person name="Ishikawa T."/>
            <person name="Jakt M."/>
            <person name="Kanapin A."/>
            <person name="Katoh M."/>
            <person name="Kawasawa Y."/>
            <person name="Kelso J."/>
            <person name="Kitamura H."/>
            <person name="Kitano H."/>
            <person name="Kollias G."/>
            <person name="Krishnan S.P."/>
            <person name="Kruger A."/>
            <person name="Kummerfeld S.K."/>
            <person name="Kurochkin I.V."/>
            <person name="Lareau L.F."/>
            <person name="Lazarevic D."/>
            <person name="Lipovich L."/>
            <person name="Liu J."/>
            <person name="Liuni S."/>
            <person name="McWilliam S."/>
            <person name="Madan Babu M."/>
            <person name="Madera M."/>
            <person name="Marchionni L."/>
            <person name="Matsuda H."/>
            <person name="Matsuzawa S."/>
            <person name="Miki H."/>
            <person name="Mignone F."/>
            <person name="Miyake S."/>
            <person name="Morris K."/>
            <person name="Mottagui-Tabar S."/>
            <person name="Mulder N."/>
            <person name="Nakano N."/>
            <person name="Nakauchi H."/>
            <person name="Ng P."/>
            <person name="Nilsson R."/>
            <person name="Nishiguchi S."/>
            <person name="Nishikawa S."/>
            <person name="Nori F."/>
            <person name="Ohara O."/>
            <person name="Okazaki Y."/>
            <person name="Orlando V."/>
            <person name="Pang K.C."/>
            <person name="Pavan W.J."/>
            <person name="Pavesi G."/>
            <person name="Pesole G."/>
            <person name="Petrovsky N."/>
            <person name="Piazza S."/>
            <person name="Reed J."/>
            <person name="Reid J.F."/>
            <person name="Ring B.Z."/>
            <person name="Ringwald M."/>
            <person name="Rost B."/>
            <person name="Ruan Y."/>
            <person name="Salzberg S.L."/>
            <person name="Sandelin A."/>
            <person name="Schneider C."/>
            <person name="Schoenbach C."/>
            <person name="Sekiguchi K."/>
            <person name="Semple C.A."/>
            <person name="Seno S."/>
            <person name="Sessa L."/>
            <person name="Sheng Y."/>
            <person name="Shibata Y."/>
            <person name="Shimada H."/>
            <person name="Shimada K."/>
            <person name="Silva D."/>
            <person name="Sinclair B."/>
            <person name="Sperling S."/>
            <person name="Stupka E."/>
            <person name="Sugiura K."/>
            <person name="Sultana R."/>
            <person name="Takenaka Y."/>
            <person name="Taki K."/>
            <person name="Tammoja K."/>
            <person name="Tan S.L."/>
            <person name="Tang S."/>
            <person name="Taylor M.S."/>
            <person name="Tegner J."/>
            <person name="Teichmann S.A."/>
            <person name="Ueda H.R."/>
            <person name="van Nimwegen E."/>
            <person name="Verardo R."/>
            <person name="Wei C.L."/>
            <person name="Yagi K."/>
            <person name="Yamanishi H."/>
            <person name="Zabarovsky E."/>
            <person name="Zhu S."/>
            <person name="Zimmer A."/>
            <person name="Hide W."/>
            <person name="Bult C."/>
            <person name="Grimmond S.M."/>
            <person name="Teasdale R.D."/>
            <person name="Liu E.T."/>
            <person name="Brusic V."/>
            <person name="Quackenbush J."/>
            <person name="Wahlestedt C."/>
            <person name="Mattick J.S."/>
            <person name="Hume D.A."/>
            <person name="Kai C."/>
            <person name="Sasaki D."/>
            <person name="Tomaru Y."/>
            <person name="Fukuda S."/>
            <person name="Kanamori-Katayama M."/>
            <person name="Suzuki M."/>
            <person name="Aoki J."/>
            <person name="Arakawa T."/>
            <person name="Iida J."/>
            <person name="Imamura K."/>
            <person name="Itoh M."/>
            <person name="Kato T."/>
            <person name="Kawaji H."/>
            <person name="Kawagashira N."/>
            <person name="Kawashima T."/>
            <person name="Kojima M."/>
            <person name="Kondo S."/>
            <person name="Konno H."/>
            <person name="Nakano K."/>
            <person name="Ninomiya N."/>
            <person name="Nishio T."/>
            <person name="Okada M."/>
            <person name="Plessy C."/>
            <person name="Shibata K."/>
            <person name="Shiraki T."/>
            <person name="Suzuki S."/>
            <person name="Tagami M."/>
            <person name="Waki K."/>
            <person name="Watahiki A."/>
            <person name="Okamura-Oho Y."/>
            <person name="Suzuki H."/>
            <person name="Kawai J."/>
            <person name="Hayashizaki Y."/>
        </authorList>
    </citation>
    <scope>NUCLEOTIDE SEQUENCE [LARGE SCALE MRNA]</scope>
    <source>
        <strain>C57BL/6J</strain>
        <tissue>Eye</tissue>
        <tissue>Spleen</tissue>
    </source>
</reference>
<reference key="2">
    <citation type="journal article" date="2004" name="Genome Res.">
        <title>The status, quality, and expansion of the NIH full-length cDNA project: the Mammalian Gene Collection (MGC).</title>
        <authorList>
            <consortium name="The MGC Project Team"/>
        </authorList>
    </citation>
    <scope>NUCLEOTIDE SEQUENCE [LARGE SCALE MRNA]</scope>
</reference>
<sequence length="366" mass="41637">MEGLVLLKALVTRLLFLLHSLVAVWRVTWVKEEHRYWLLALLNLLLVLETVLTLKFKRGRGYKWLSPAIFVYLVNIMPSLWLLEMHHGNQYCSTQSERMAQNFSRRGDVNQTLSSHRATNGMGNILELARGFVDNLSMVCEPVWTLGLHQTLLLILIIGRWLLPIGGTITRDQLSELLLMFVGTAADILEFTTETLKENNVRTNPTLVSGILVVWTWSMLQFPLDLAVQLKLVCPASVKARGFLRVFLCQYSADLWAIGLSFFIQDGPFLVVRLVLMIYFKVINHMLVFFAVKNSLVMALHFYRLVALIMATRDFMRDHPESPKPEHSGPDQPSESGPSEWEDASPEALPLRTSPVTSEESYPTTP</sequence>
<gene>
    <name type="primary">Tmem26</name>
</gene>
<comment type="subcellular location">
    <subcellularLocation>
        <location evidence="3">Membrane</location>
        <topology evidence="3">Multi-pass membrane protein</topology>
    </subcellularLocation>
</comment>
<protein>
    <recommendedName>
        <fullName>Transmembrane protein 26</fullName>
    </recommendedName>
</protein>
<feature type="chain" id="PRO_0000245866" description="Transmembrane protein 26">
    <location>
        <begin position="1"/>
        <end position="366"/>
    </location>
</feature>
<feature type="transmembrane region" description="Helical" evidence="1">
    <location>
        <begin position="4"/>
        <end position="24"/>
    </location>
</feature>
<feature type="transmembrane region" description="Helical" evidence="1">
    <location>
        <begin position="36"/>
        <end position="56"/>
    </location>
</feature>
<feature type="transmembrane region" description="Helical" evidence="1">
    <location>
        <begin position="64"/>
        <end position="84"/>
    </location>
</feature>
<feature type="transmembrane region" description="Helical" evidence="1">
    <location>
        <begin position="138"/>
        <end position="158"/>
    </location>
</feature>
<feature type="transmembrane region" description="Helical" evidence="1">
    <location>
        <begin position="176"/>
        <end position="196"/>
    </location>
</feature>
<feature type="transmembrane region" description="Helical" evidence="1">
    <location>
        <begin position="208"/>
        <end position="228"/>
    </location>
</feature>
<feature type="transmembrane region" description="Helical" evidence="1">
    <location>
        <begin position="258"/>
        <end position="278"/>
    </location>
</feature>
<feature type="transmembrane region" description="Helical" evidence="1">
    <location>
        <begin position="282"/>
        <end position="302"/>
    </location>
</feature>
<feature type="region of interest" description="Disordered" evidence="2">
    <location>
        <begin position="319"/>
        <end position="366"/>
    </location>
</feature>
<feature type="compositionally biased region" description="Basic and acidic residues" evidence="2">
    <location>
        <begin position="319"/>
        <end position="329"/>
    </location>
</feature>
<feature type="compositionally biased region" description="Polar residues" evidence="2">
    <location>
        <begin position="354"/>
        <end position="366"/>
    </location>
</feature>
<feature type="glycosylation site" description="N-linked (GlcNAc...) asparagine" evidence="1">
    <location>
        <position position="110"/>
    </location>
</feature>
<feature type="sequence conflict" description="In Ref. 1; BAE25574." evidence="3" ref="1">
    <original>L</original>
    <variation>M</variation>
    <location>
        <position position="45"/>
    </location>
</feature>
<feature type="sequence conflict" description="In Ref. 1; BAC39167." evidence="3" ref="1">
    <original>E</original>
    <variation>D</variation>
    <location>
        <position position="49"/>
    </location>
</feature>
<dbReference type="EMBL" id="AK143866">
    <property type="protein sequence ID" value="BAE25574.1"/>
    <property type="molecule type" value="mRNA"/>
</dbReference>
<dbReference type="EMBL" id="AK084351">
    <property type="protein sequence ID" value="BAC39167.1"/>
    <property type="molecule type" value="mRNA"/>
</dbReference>
<dbReference type="EMBL" id="BC117503">
    <property type="protein sequence ID" value="AAI17504.1"/>
    <property type="molecule type" value="mRNA"/>
</dbReference>
<dbReference type="CCDS" id="CCDS23906.1"/>
<dbReference type="RefSeq" id="NP_808462.2">
    <property type="nucleotide sequence ID" value="NM_177794.3"/>
</dbReference>
<dbReference type="BioGRID" id="236485">
    <property type="interactions" value="1"/>
</dbReference>
<dbReference type="STRING" id="10090.ENSMUSP00000079789"/>
<dbReference type="GlyCosmos" id="Q3UP23">
    <property type="glycosylation" value="1 site, No reported glycans"/>
</dbReference>
<dbReference type="GlyGen" id="Q3UP23">
    <property type="glycosylation" value="1 site"/>
</dbReference>
<dbReference type="iPTMnet" id="Q3UP23"/>
<dbReference type="PhosphoSitePlus" id="Q3UP23"/>
<dbReference type="PaxDb" id="10090-ENSMUSP00000079789"/>
<dbReference type="ProteomicsDB" id="259031"/>
<dbReference type="Antibodypedia" id="3065">
    <property type="antibodies" value="33 antibodies from 12 providers"/>
</dbReference>
<dbReference type="Ensembl" id="ENSMUST00000080995.8">
    <property type="protein sequence ID" value="ENSMUSP00000079789.7"/>
    <property type="gene ID" value="ENSMUSG00000060044.9"/>
</dbReference>
<dbReference type="GeneID" id="327766"/>
<dbReference type="KEGG" id="mmu:327766"/>
<dbReference type="UCSC" id="uc007fmm.2">
    <property type="organism name" value="mouse"/>
</dbReference>
<dbReference type="AGR" id="MGI:2143537"/>
<dbReference type="CTD" id="219623"/>
<dbReference type="MGI" id="MGI:2143537">
    <property type="gene designation" value="Tmem26"/>
</dbReference>
<dbReference type="VEuPathDB" id="HostDB:ENSMUSG00000060044"/>
<dbReference type="eggNOG" id="KOG4610">
    <property type="taxonomic scope" value="Eukaryota"/>
</dbReference>
<dbReference type="GeneTree" id="ENSGT00390000014794"/>
<dbReference type="HOGENOM" id="CLU_032511_0_0_1"/>
<dbReference type="InParanoid" id="Q3UP23"/>
<dbReference type="OMA" id="HHGTQYC"/>
<dbReference type="OrthoDB" id="10042902at2759"/>
<dbReference type="PhylomeDB" id="Q3UP23"/>
<dbReference type="TreeFam" id="TF314156"/>
<dbReference type="BioGRID-ORCS" id="327766">
    <property type="hits" value="2 hits in 76 CRISPR screens"/>
</dbReference>
<dbReference type="PRO" id="PR:Q3UP23"/>
<dbReference type="Proteomes" id="UP000000589">
    <property type="component" value="Chromosome 10"/>
</dbReference>
<dbReference type="RNAct" id="Q3UP23">
    <property type="molecule type" value="protein"/>
</dbReference>
<dbReference type="Bgee" id="ENSMUSG00000060044">
    <property type="expression patterns" value="Expressed in dorsal pancreas and 137 other cell types or tissues"/>
</dbReference>
<dbReference type="ExpressionAtlas" id="Q3UP23">
    <property type="expression patterns" value="baseline and differential"/>
</dbReference>
<dbReference type="GO" id="GO:0016020">
    <property type="term" value="C:membrane"/>
    <property type="evidence" value="ECO:0007669"/>
    <property type="project" value="UniProtKB-SubCell"/>
</dbReference>
<dbReference type="InterPro" id="IPR019169">
    <property type="entry name" value="Transmembrane_26"/>
</dbReference>
<dbReference type="PANTHER" id="PTHR22168">
    <property type="entry name" value="TMEM26 PROTEIN"/>
    <property type="match status" value="1"/>
</dbReference>
<dbReference type="PANTHER" id="PTHR22168:SF3">
    <property type="entry name" value="TRANSMEMBRANE PROTEIN 26"/>
    <property type="match status" value="1"/>
</dbReference>
<dbReference type="Pfam" id="PF09772">
    <property type="entry name" value="Tmem26"/>
    <property type="match status" value="1"/>
</dbReference>